<dbReference type="EMBL" id="AF152214">
    <property type="protein sequence ID" value="AAF25767.1"/>
    <property type="molecule type" value="Genomic_DNA"/>
</dbReference>
<dbReference type="GO" id="GO:0009507">
    <property type="term" value="C:chloroplast"/>
    <property type="evidence" value="ECO:0007669"/>
    <property type="project" value="UniProtKB-SubCell"/>
</dbReference>
<dbReference type="GO" id="GO:0003723">
    <property type="term" value="F:RNA binding"/>
    <property type="evidence" value="ECO:0007669"/>
    <property type="project" value="UniProtKB-KW"/>
</dbReference>
<dbReference type="GO" id="GO:0006397">
    <property type="term" value="P:mRNA processing"/>
    <property type="evidence" value="ECO:0007669"/>
    <property type="project" value="UniProtKB-KW"/>
</dbReference>
<dbReference type="GO" id="GO:0008380">
    <property type="term" value="P:RNA splicing"/>
    <property type="evidence" value="ECO:0007669"/>
    <property type="project" value="UniProtKB-UniRule"/>
</dbReference>
<dbReference type="GO" id="GO:0008033">
    <property type="term" value="P:tRNA processing"/>
    <property type="evidence" value="ECO:0007669"/>
    <property type="project" value="UniProtKB-KW"/>
</dbReference>
<dbReference type="HAMAP" id="MF_01390">
    <property type="entry name" value="MatK"/>
    <property type="match status" value="1"/>
</dbReference>
<dbReference type="InterPro" id="IPR024937">
    <property type="entry name" value="Domain_X"/>
</dbReference>
<dbReference type="InterPro" id="IPR002866">
    <property type="entry name" value="Maturase_MatK"/>
</dbReference>
<dbReference type="InterPro" id="IPR024942">
    <property type="entry name" value="Maturase_MatK_N"/>
</dbReference>
<dbReference type="PANTHER" id="PTHR34811">
    <property type="entry name" value="MATURASE K"/>
    <property type="match status" value="1"/>
</dbReference>
<dbReference type="PANTHER" id="PTHR34811:SF1">
    <property type="entry name" value="MATURASE K"/>
    <property type="match status" value="1"/>
</dbReference>
<dbReference type="Pfam" id="PF01348">
    <property type="entry name" value="Intron_maturas2"/>
    <property type="match status" value="1"/>
</dbReference>
<dbReference type="Pfam" id="PF01824">
    <property type="entry name" value="MatK_N"/>
    <property type="match status" value="1"/>
</dbReference>
<reference key="1">
    <citation type="journal article" date="2000" name="Am. J. Bot.">
        <title>Relationships within Cupressaceae sensu lato: a combined morphological and molecular approach.</title>
        <authorList>
            <person name="Gadek P.A."/>
            <person name="Alpers D.L."/>
            <person name="Heslewood M.M."/>
            <person name="Quinn C.J."/>
        </authorList>
    </citation>
    <scope>NUCLEOTIDE SEQUENCE [GENOMIC DNA]</scope>
</reference>
<protein>
    <recommendedName>
        <fullName evidence="1">Maturase K</fullName>
    </recommendedName>
    <alternativeName>
        <fullName evidence="1">Intron maturase</fullName>
    </alternativeName>
</protein>
<proteinExistence type="inferred from homology"/>
<geneLocation type="chloroplast"/>
<comment type="function">
    <text evidence="1">Usually encoded in the trnK tRNA gene intron. Probably assists in splicing its own and other chloroplast group II introns.</text>
</comment>
<comment type="subcellular location">
    <subcellularLocation>
        <location>Plastid</location>
        <location>Chloroplast</location>
    </subcellularLocation>
</comment>
<comment type="similarity">
    <text evidence="1">Belongs to the intron maturase 2 family. MatK subfamily.</text>
</comment>
<evidence type="ECO:0000255" key="1">
    <source>
        <dbReference type="HAMAP-Rule" id="MF_01390"/>
    </source>
</evidence>
<sequence length="509" mass="60993">MDEFQRNSNXHRXWQQLFLYPLFFREDLYAIAHDHHLDRSGSSEPTEIFFSHFFSFLTVKRSIRRIRKQNKSISLFGNSDSNKLIEYNKNFSFKSMLEGFTIVLEVSIAMTSKHFIKGMDGWNSLRSIHCIFPFMEDKLPHSNYISDIRVPYSIHPEILVRIFRRWIRDVPSLHLLRLILHEWKNSFSQENLEKVLITQRGNTRFSLFLWNSYVYECESFLIPLIKRFFNPQSLLYGSFPDRTHFEKKIKDIVIFPLQKISPKXIWLLKDSFIHYVRYGERSLIALKGTHLQVKKCRYHLFHFWQYYFHLWFQPYRICSLELSKTSFSFLGFFLNVKMRPLVVRAKMLDDLFITDLITNELNPIAPIRSILFSLAKEKFCDISGWPISKLSWTSLSDDDILDRFDRIWINLFHYYSGSINQDGLYHIKYILLLSCAKTLACKHKSTIRVVREQLGSELFTNSFSKEREFISSSFSKTRSQRERIWNSEISQRNPLXXFWQKMENKQIEN</sequence>
<name>MATK_THUOC</name>
<feature type="chain" id="PRO_0000143735" description="Maturase K">
    <location>
        <begin position="1"/>
        <end position="509"/>
    </location>
</feature>
<accession>Q9MSS3</accession>
<keyword id="KW-0150">Chloroplast</keyword>
<keyword id="KW-0507">mRNA processing</keyword>
<keyword id="KW-0934">Plastid</keyword>
<keyword id="KW-0694">RNA-binding</keyword>
<keyword id="KW-0819">tRNA processing</keyword>
<gene>
    <name evidence="1" type="primary">matK</name>
</gene>
<organism>
    <name type="scientific">Thuja occidentalis</name>
    <name type="common">Northern white-cedar</name>
    <name type="synonym">Arborvitae</name>
    <dbReference type="NCBI Taxonomy" id="3317"/>
    <lineage>
        <taxon>Eukaryota</taxon>
        <taxon>Viridiplantae</taxon>
        <taxon>Streptophyta</taxon>
        <taxon>Embryophyta</taxon>
        <taxon>Tracheophyta</taxon>
        <taxon>Spermatophyta</taxon>
        <taxon>Pinopsida</taxon>
        <taxon>Pinidae</taxon>
        <taxon>Conifers II</taxon>
        <taxon>Cupressales</taxon>
        <taxon>Cupressaceae</taxon>
        <taxon>Thuja</taxon>
    </lineage>
</organism>